<accession>B6I0C6</accession>
<name>KAD_ECOSE</name>
<reference key="1">
    <citation type="journal article" date="2008" name="DNA Res.">
        <title>Complete genome sequence and comparative analysis of the wild-type commensal Escherichia coli strain SE11 isolated from a healthy adult.</title>
        <authorList>
            <person name="Oshima K."/>
            <person name="Toh H."/>
            <person name="Ogura Y."/>
            <person name="Sasamoto H."/>
            <person name="Morita H."/>
            <person name="Park S.-H."/>
            <person name="Ooka T."/>
            <person name="Iyoda S."/>
            <person name="Taylor T.D."/>
            <person name="Hayashi T."/>
            <person name="Itoh K."/>
            <person name="Hattori M."/>
        </authorList>
    </citation>
    <scope>NUCLEOTIDE SEQUENCE [LARGE SCALE GENOMIC DNA]</scope>
    <source>
        <strain>SE11</strain>
    </source>
</reference>
<sequence>MRIILLGAPGAGKGTQAQFIMEKYGIPQISTGDMLRAAVKSGSELGKQAKDIMDAGKLVTDELVIALVKERIAQEDCRNGFLLDGFPRTIPQADAMKEAGINVDYVLEFDVPDELIVDRIVGRRVHAPSGRVYHVKFNPPKVEGKDDVTGEELTTRKDDQEETVRKRLVEYHQMTAPLIGYYSKEAEAGNTKYAKVDGTKPVAEVRADLEKILG</sequence>
<keyword id="KW-0007">Acetylation</keyword>
<keyword id="KW-0067">ATP-binding</keyword>
<keyword id="KW-0963">Cytoplasm</keyword>
<keyword id="KW-0418">Kinase</keyword>
<keyword id="KW-0545">Nucleotide biosynthesis</keyword>
<keyword id="KW-0547">Nucleotide-binding</keyword>
<keyword id="KW-0808">Transferase</keyword>
<organism>
    <name type="scientific">Escherichia coli (strain SE11)</name>
    <dbReference type="NCBI Taxonomy" id="409438"/>
    <lineage>
        <taxon>Bacteria</taxon>
        <taxon>Pseudomonadati</taxon>
        <taxon>Pseudomonadota</taxon>
        <taxon>Gammaproteobacteria</taxon>
        <taxon>Enterobacterales</taxon>
        <taxon>Enterobacteriaceae</taxon>
        <taxon>Escherichia</taxon>
    </lineage>
</organism>
<evidence type="ECO:0000250" key="1"/>
<evidence type="ECO:0000255" key="2">
    <source>
        <dbReference type="HAMAP-Rule" id="MF_00235"/>
    </source>
</evidence>
<feature type="chain" id="PRO_1000100560" description="Adenylate kinase">
    <location>
        <begin position="1"/>
        <end position="214"/>
    </location>
</feature>
<feature type="region of interest" description="NMP" evidence="2">
    <location>
        <begin position="30"/>
        <end position="59"/>
    </location>
</feature>
<feature type="region of interest" description="LID">
    <location>
        <begin position="122"/>
        <end position="159"/>
    </location>
</feature>
<feature type="binding site" evidence="2">
    <location>
        <begin position="10"/>
        <end position="15"/>
    </location>
    <ligand>
        <name>ATP</name>
        <dbReference type="ChEBI" id="CHEBI:30616"/>
    </ligand>
</feature>
<feature type="binding site" evidence="2">
    <location>
        <position position="31"/>
    </location>
    <ligand>
        <name>AMP</name>
        <dbReference type="ChEBI" id="CHEBI:456215"/>
    </ligand>
</feature>
<feature type="binding site" evidence="2">
    <location>
        <position position="36"/>
    </location>
    <ligand>
        <name>AMP</name>
        <dbReference type="ChEBI" id="CHEBI:456215"/>
    </ligand>
</feature>
<feature type="binding site" evidence="2">
    <location>
        <begin position="57"/>
        <end position="59"/>
    </location>
    <ligand>
        <name>AMP</name>
        <dbReference type="ChEBI" id="CHEBI:456215"/>
    </ligand>
</feature>
<feature type="binding site" evidence="2">
    <location>
        <begin position="85"/>
        <end position="88"/>
    </location>
    <ligand>
        <name>AMP</name>
        <dbReference type="ChEBI" id="CHEBI:456215"/>
    </ligand>
</feature>
<feature type="binding site" evidence="2">
    <location>
        <position position="92"/>
    </location>
    <ligand>
        <name>AMP</name>
        <dbReference type="ChEBI" id="CHEBI:456215"/>
    </ligand>
</feature>
<feature type="binding site" evidence="2">
    <location>
        <position position="123"/>
    </location>
    <ligand>
        <name>ATP</name>
        <dbReference type="ChEBI" id="CHEBI:30616"/>
    </ligand>
</feature>
<feature type="binding site" evidence="2">
    <location>
        <begin position="132"/>
        <end position="133"/>
    </location>
    <ligand>
        <name>ATP</name>
        <dbReference type="ChEBI" id="CHEBI:30616"/>
    </ligand>
</feature>
<feature type="binding site" evidence="2">
    <location>
        <position position="156"/>
    </location>
    <ligand>
        <name>AMP</name>
        <dbReference type="ChEBI" id="CHEBI:456215"/>
    </ligand>
</feature>
<feature type="binding site" evidence="2">
    <location>
        <position position="167"/>
    </location>
    <ligand>
        <name>AMP</name>
        <dbReference type="ChEBI" id="CHEBI:456215"/>
    </ligand>
</feature>
<feature type="binding site" evidence="2">
    <location>
        <position position="200"/>
    </location>
    <ligand>
        <name>ATP</name>
        <dbReference type="ChEBI" id="CHEBI:30616"/>
    </ligand>
</feature>
<feature type="modified residue" description="N6-acetyllysine" evidence="1">
    <location>
        <position position="192"/>
    </location>
</feature>
<proteinExistence type="inferred from homology"/>
<gene>
    <name evidence="2" type="primary">adk</name>
    <name type="ordered locus">ECSE_0499</name>
</gene>
<dbReference type="EC" id="2.7.4.3" evidence="2"/>
<dbReference type="EMBL" id="AP009240">
    <property type="protein sequence ID" value="BAG76023.1"/>
    <property type="molecule type" value="Genomic_DNA"/>
</dbReference>
<dbReference type="RefSeq" id="WP_001220233.1">
    <property type="nucleotide sequence ID" value="NC_011415.1"/>
</dbReference>
<dbReference type="SMR" id="B6I0C6"/>
<dbReference type="GeneID" id="75170492"/>
<dbReference type="KEGG" id="ecy:ECSE_0499"/>
<dbReference type="HOGENOM" id="CLU_032354_1_2_6"/>
<dbReference type="UniPathway" id="UPA00588">
    <property type="reaction ID" value="UER00649"/>
</dbReference>
<dbReference type="Proteomes" id="UP000008199">
    <property type="component" value="Chromosome"/>
</dbReference>
<dbReference type="GO" id="GO:0005737">
    <property type="term" value="C:cytoplasm"/>
    <property type="evidence" value="ECO:0007669"/>
    <property type="project" value="UniProtKB-SubCell"/>
</dbReference>
<dbReference type="GO" id="GO:0004017">
    <property type="term" value="F:adenylate kinase activity"/>
    <property type="evidence" value="ECO:0007669"/>
    <property type="project" value="UniProtKB-UniRule"/>
</dbReference>
<dbReference type="GO" id="GO:0005524">
    <property type="term" value="F:ATP binding"/>
    <property type="evidence" value="ECO:0007669"/>
    <property type="project" value="UniProtKB-UniRule"/>
</dbReference>
<dbReference type="GO" id="GO:0044209">
    <property type="term" value="P:AMP salvage"/>
    <property type="evidence" value="ECO:0007669"/>
    <property type="project" value="UniProtKB-UniRule"/>
</dbReference>
<dbReference type="CDD" id="cd01428">
    <property type="entry name" value="ADK"/>
    <property type="match status" value="1"/>
</dbReference>
<dbReference type="FunFam" id="3.40.50.300:FF:000106">
    <property type="entry name" value="Adenylate kinase mitochondrial"/>
    <property type="match status" value="1"/>
</dbReference>
<dbReference type="Gene3D" id="3.40.50.300">
    <property type="entry name" value="P-loop containing nucleotide triphosphate hydrolases"/>
    <property type="match status" value="1"/>
</dbReference>
<dbReference type="HAMAP" id="MF_00235">
    <property type="entry name" value="Adenylate_kinase_Adk"/>
    <property type="match status" value="1"/>
</dbReference>
<dbReference type="InterPro" id="IPR006259">
    <property type="entry name" value="Adenyl_kin_sub"/>
</dbReference>
<dbReference type="InterPro" id="IPR000850">
    <property type="entry name" value="Adenylat/UMP-CMP_kin"/>
</dbReference>
<dbReference type="InterPro" id="IPR033690">
    <property type="entry name" value="Adenylat_kinase_CS"/>
</dbReference>
<dbReference type="InterPro" id="IPR007862">
    <property type="entry name" value="Adenylate_kinase_lid-dom"/>
</dbReference>
<dbReference type="InterPro" id="IPR027417">
    <property type="entry name" value="P-loop_NTPase"/>
</dbReference>
<dbReference type="NCBIfam" id="TIGR01351">
    <property type="entry name" value="adk"/>
    <property type="match status" value="1"/>
</dbReference>
<dbReference type="NCBIfam" id="NF001379">
    <property type="entry name" value="PRK00279.1-1"/>
    <property type="match status" value="1"/>
</dbReference>
<dbReference type="NCBIfam" id="NF001380">
    <property type="entry name" value="PRK00279.1-2"/>
    <property type="match status" value="1"/>
</dbReference>
<dbReference type="NCBIfam" id="NF001381">
    <property type="entry name" value="PRK00279.1-3"/>
    <property type="match status" value="1"/>
</dbReference>
<dbReference type="NCBIfam" id="NF011100">
    <property type="entry name" value="PRK14527.1"/>
    <property type="match status" value="1"/>
</dbReference>
<dbReference type="PANTHER" id="PTHR23359">
    <property type="entry name" value="NUCLEOTIDE KINASE"/>
    <property type="match status" value="1"/>
</dbReference>
<dbReference type="Pfam" id="PF00406">
    <property type="entry name" value="ADK"/>
    <property type="match status" value="1"/>
</dbReference>
<dbReference type="Pfam" id="PF05191">
    <property type="entry name" value="ADK_lid"/>
    <property type="match status" value="1"/>
</dbReference>
<dbReference type="PRINTS" id="PR00094">
    <property type="entry name" value="ADENYLTKNASE"/>
</dbReference>
<dbReference type="SUPFAM" id="SSF52540">
    <property type="entry name" value="P-loop containing nucleoside triphosphate hydrolases"/>
    <property type="match status" value="1"/>
</dbReference>
<dbReference type="PROSITE" id="PS00113">
    <property type="entry name" value="ADENYLATE_KINASE"/>
    <property type="match status" value="1"/>
</dbReference>
<comment type="function">
    <text evidence="2">Catalyzes the reversible transfer of the terminal phosphate group between ATP and AMP. Plays an important role in cellular energy homeostasis and in adenine nucleotide metabolism.</text>
</comment>
<comment type="catalytic activity">
    <reaction evidence="2">
        <text>AMP + ATP = 2 ADP</text>
        <dbReference type="Rhea" id="RHEA:12973"/>
        <dbReference type="ChEBI" id="CHEBI:30616"/>
        <dbReference type="ChEBI" id="CHEBI:456215"/>
        <dbReference type="ChEBI" id="CHEBI:456216"/>
        <dbReference type="EC" id="2.7.4.3"/>
    </reaction>
</comment>
<comment type="pathway">
    <text evidence="2">Purine metabolism; AMP biosynthesis via salvage pathway; AMP from ADP: step 1/1.</text>
</comment>
<comment type="subunit">
    <text evidence="2">Monomer.</text>
</comment>
<comment type="subcellular location">
    <subcellularLocation>
        <location evidence="2">Cytoplasm</location>
    </subcellularLocation>
</comment>
<comment type="domain">
    <text evidence="2">Consists of three domains, a large central CORE domain and two small peripheral domains, NMPbind and LID, which undergo movements during catalysis. The LID domain closes over the site of phosphoryl transfer upon ATP binding. Assembling and dissambling the active center during each catalytic cycle provides an effective means to prevent ATP hydrolysis.</text>
</comment>
<comment type="similarity">
    <text evidence="2">Belongs to the adenylate kinase family.</text>
</comment>
<protein>
    <recommendedName>
        <fullName evidence="2">Adenylate kinase</fullName>
        <shortName evidence="2">AK</shortName>
        <ecNumber evidence="2">2.7.4.3</ecNumber>
    </recommendedName>
    <alternativeName>
        <fullName evidence="2">ATP-AMP transphosphorylase</fullName>
    </alternativeName>
    <alternativeName>
        <fullName evidence="2">ATP:AMP phosphotransferase</fullName>
    </alternativeName>
    <alternativeName>
        <fullName evidence="2">Adenylate monophosphate kinase</fullName>
    </alternativeName>
</protein>